<name>NAGK_YERPS</name>
<feature type="chain" id="PRO_0000270127" description="N-acetyl-D-glucosamine kinase">
    <location>
        <begin position="1"/>
        <end position="304"/>
    </location>
</feature>
<feature type="binding site" evidence="1">
    <location>
        <begin position="4"/>
        <end position="11"/>
    </location>
    <ligand>
        <name>ATP</name>
        <dbReference type="ChEBI" id="CHEBI:30616"/>
    </ligand>
</feature>
<feature type="binding site" evidence="1">
    <location>
        <begin position="133"/>
        <end position="140"/>
    </location>
    <ligand>
        <name>ATP</name>
        <dbReference type="ChEBI" id="CHEBI:30616"/>
    </ligand>
</feature>
<feature type="binding site" evidence="1">
    <location>
        <position position="157"/>
    </location>
    <ligand>
        <name>Zn(2+)</name>
        <dbReference type="ChEBI" id="CHEBI:29105"/>
    </ligand>
</feature>
<feature type="binding site" evidence="1">
    <location>
        <position position="177"/>
    </location>
    <ligand>
        <name>Zn(2+)</name>
        <dbReference type="ChEBI" id="CHEBI:29105"/>
    </ligand>
</feature>
<feature type="binding site" evidence="1">
    <location>
        <position position="179"/>
    </location>
    <ligand>
        <name>Zn(2+)</name>
        <dbReference type="ChEBI" id="CHEBI:29105"/>
    </ligand>
</feature>
<feature type="binding site" evidence="1">
    <location>
        <position position="184"/>
    </location>
    <ligand>
        <name>Zn(2+)</name>
        <dbReference type="ChEBI" id="CHEBI:29105"/>
    </ligand>
</feature>
<reference key="1">
    <citation type="journal article" date="2004" name="Proc. Natl. Acad. Sci. U.S.A.">
        <title>Insights into the evolution of Yersinia pestis through whole-genome comparison with Yersinia pseudotuberculosis.</title>
        <authorList>
            <person name="Chain P.S.G."/>
            <person name="Carniel E."/>
            <person name="Larimer F.W."/>
            <person name="Lamerdin J."/>
            <person name="Stoutland P.O."/>
            <person name="Regala W.M."/>
            <person name="Georgescu A.M."/>
            <person name="Vergez L.M."/>
            <person name="Land M.L."/>
            <person name="Motin V.L."/>
            <person name="Brubaker R.R."/>
            <person name="Fowler J."/>
            <person name="Hinnebusch J."/>
            <person name="Marceau M."/>
            <person name="Medigue C."/>
            <person name="Simonet M."/>
            <person name="Chenal-Francisque V."/>
            <person name="Souza B."/>
            <person name="Dacheux D."/>
            <person name="Elliott J.M."/>
            <person name="Derbise A."/>
            <person name="Hauser L.J."/>
            <person name="Garcia E."/>
        </authorList>
    </citation>
    <scope>NUCLEOTIDE SEQUENCE [LARGE SCALE GENOMIC DNA]</scope>
    <source>
        <strain>IP32953</strain>
    </source>
</reference>
<accession>Q669P5</accession>
<evidence type="ECO:0000255" key="1">
    <source>
        <dbReference type="HAMAP-Rule" id="MF_01271"/>
    </source>
</evidence>
<sequence>MYYGFDMGGTKIELGVFDENLQRIWHKRVPTPREDYPQLLQILRDLTEEADTYCGVQGSVGIGIPGLPNADDGTVFTANVPSAMGQPLQADLSRLIQREVRIDNDANCFALSEAWDPEFRTYPTVLGLILGTGVGGGLIVNGSIVSGRNHITGEFGHFRLPVDALDILGADIPRVPCGCGHRGCIENYISGRGFEWMYSHFYQHTLPATDIIAHYAAGEPKAVAHVERFMDVLAVCLGNLLTMLDPHLVVVGGGLSNFEKIYQELPKRLPAHLLRVARLPRIEKARYGDSGGVRGAAFLHLAEK</sequence>
<proteinExistence type="inferred from homology"/>
<protein>
    <recommendedName>
        <fullName evidence="1">N-acetyl-D-glucosamine kinase</fullName>
        <ecNumber evidence="1">2.7.1.59</ecNumber>
    </recommendedName>
    <alternativeName>
        <fullName evidence="1">GlcNAc kinase</fullName>
    </alternativeName>
</protein>
<dbReference type="EC" id="2.7.1.59" evidence="1"/>
<dbReference type="EMBL" id="BX936398">
    <property type="protein sequence ID" value="CAH21677.1"/>
    <property type="molecule type" value="Genomic_DNA"/>
</dbReference>
<dbReference type="RefSeq" id="WP_011192586.1">
    <property type="nucleotide sequence ID" value="NC_006155.1"/>
</dbReference>
<dbReference type="SMR" id="Q669P5"/>
<dbReference type="GeneID" id="49785556"/>
<dbReference type="KEGG" id="ypo:BZ17_11"/>
<dbReference type="KEGG" id="yps:YPTB2439"/>
<dbReference type="PATRIC" id="fig|273123.14.peg.12"/>
<dbReference type="UniPathway" id="UPA00544"/>
<dbReference type="Proteomes" id="UP000001011">
    <property type="component" value="Chromosome"/>
</dbReference>
<dbReference type="GO" id="GO:0005524">
    <property type="term" value="F:ATP binding"/>
    <property type="evidence" value="ECO:0007669"/>
    <property type="project" value="UniProtKB-UniRule"/>
</dbReference>
<dbReference type="GO" id="GO:0045127">
    <property type="term" value="F:N-acetylglucosamine kinase activity"/>
    <property type="evidence" value="ECO:0007669"/>
    <property type="project" value="UniProtKB-UniRule"/>
</dbReference>
<dbReference type="GO" id="GO:0008270">
    <property type="term" value="F:zinc ion binding"/>
    <property type="evidence" value="ECO:0007669"/>
    <property type="project" value="UniProtKB-UniRule"/>
</dbReference>
<dbReference type="GO" id="GO:0006044">
    <property type="term" value="P:N-acetylglucosamine metabolic process"/>
    <property type="evidence" value="ECO:0007669"/>
    <property type="project" value="UniProtKB-UniRule"/>
</dbReference>
<dbReference type="GO" id="GO:0009254">
    <property type="term" value="P:peptidoglycan turnover"/>
    <property type="evidence" value="ECO:0007669"/>
    <property type="project" value="UniProtKB-UniRule"/>
</dbReference>
<dbReference type="CDD" id="cd24057">
    <property type="entry name" value="ASKHA_NBD_ROK_NAGK"/>
    <property type="match status" value="1"/>
</dbReference>
<dbReference type="FunFam" id="3.30.420.40:FF:000049">
    <property type="entry name" value="N-acetyl-D-glucosamine kinase"/>
    <property type="match status" value="1"/>
</dbReference>
<dbReference type="FunFam" id="3.30.420.40:FF:000051">
    <property type="entry name" value="N-acetyl-D-glucosamine kinase"/>
    <property type="match status" value="1"/>
</dbReference>
<dbReference type="Gene3D" id="3.30.420.40">
    <property type="match status" value="2"/>
</dbReference>
<dbReference type="HAMAP" id="MF_01271">
    <property type="entry name" value="GlcNAc_kinase"/>
    <property type="match status" value="1"/>
</dbReference>
<dbReference type="InterPro" id="IPR043129">
    <property type="entry name" value="ATPase_NBD"/>
</dbReference>
<dbReference type="InterPro" id="IPR023505">
    <property type="entry name" value="N-acetyl-D-glucosamine_kinase"/>
</dbReference>
<dbReference type="InterPro" id="IPR000600">
    <property type="entry name" value="ROK"/>
</dbReference>
<dbReference type="InterPro" id="IPR049874">
    <property type="entry name" value="ROK_cs"/>
</dbReference>
<dbReference type="NCBIfam" id="NF009835">
    <property type="entry name" value="PRK13310.1"/>
    <property type="match status" value="1"/>
</dbReference>
<dbReference type="NCBIfam" id="NF009836">
    <property type="entry name" value="PRK13311.1"/>
    <property type="match status" value="1"/>
</dbReference>
<dbReference type="PANTHER" id="PTHR18964:SF162">
    <property type="entry name" value="N-ACETYL-D-GLUCOSAMINE KINASE"/>
    <property type="match status" value="1"/>
</dbReference>
<dbReference type="PANTHER" id="PTHR18964">
    <property type="entry name" value="ROK (REPRESSOR, ORF, KINASE) FAMILY"/>
    <property type="match status" value="1"/>
</dbReference>
<dbReference type="Pfam" id="PF00480">
    <property type="entry name" value="ROK"/>
    <property type="match status" value="1"/>
</dbReference>
<dbReference type="SUPFAM" id="SSF53067">
    <property type="entry name" value="Actin-like ATPase domain"/>
    <property type="match status" value="1"/>
</dbReference>
<dbReference type="PROSITE" id="PS01125">
    <property type="entry name" value="ROK"/>
    <property type="match status" value="1"/>
</dbReference>
<gene>
    <name evidence="1" type="primary">nagK</name>
    <name type="ordered locus">YPTB2439</name>
</gene>
<organism>
    <name type="scientific">Yersinia pseudotuberculosis serotype I (strain IP32953)</name>
    <dbReference type="NCBI Taxonomy" id="273123"/>
    <lineage>
        <taxon>Bacteria</taxon>
        <taxon>Pseudomonadati</taxon>
        <taxon>Pseudomonadota</taxon>
        <taxon>Gammaproteobacteria</taxon>
        <taxon>Enterobacterales</taxon>
        <taxon>Yersiniaceae</taxon>
        <taxon>Yersinia</taxon>
    </lineage>
</organism>
<keyword id="KW-0067">ATP-binding</keyword>
<keyword id="KW-0119">Carbohydrate metabolism</keyword>
<keyword id="KW-0418">Kinase</keyword>
<keyword id="KW-0479">Metal-binding</keyword>
<keyword id="KW-0547">Nucleotide-binding</keyword>
<keyword id="KW-0808">Transferase</keyword>
<keyword id="KW-0862">Zinc</keyword>
<comment type="function">
    <text evidence="1">Catalyzes the phosphorylation of N-acetyl-D-glucosamine (GlcNAc) derived from cell-wall degradation, yielding GlcNAc-6-P.</text>
</comment>
<comment type="catalytic activity">
    <reaction evidence="1">
        <text>N-acetyl-D-glucosamine + ATP = N-acetyl-D-glucosamine 6-phosphate + ADP + H(+)</text>
        <dbReference type="Rhea" id="RHEA:17417"/>
        <dbReference type="ChEBI" id="CHEBI:15378"/>
        <dbReference type="ChEBI" id="CHEBI:30616"/>
        <dbReference type="ChEBI" id="CHEBI:57513"/>
        <dbReference type="ChEBI" id="CHEBI:456216"/>
        <dbReference type="ChEBI" id="CHEBI:506227"/>
        <dbReference type="EC" id="2.7.1.59"/>
    </reaction>
</comment>
<comment type="pathway">
    <text evidence="1">Cell wall biogenesis; peptidoglycan recycling.</text>
</comment>
<comment type="similarity">
    <text evidence="1">Belongs to the ROK (NagC/XylR) family. NagK subfamily.</text>
</comment>